<protein>
    <recommendedName>
        <fullName evidence="1">Adenine deaminase</fullName>
        <shortName evidence="1">Adenase</shortName>
        <shortName evidence="1">Adenine aminase</shortName>
        <ecNumber evidence="1">3.5.4.2</ecNumber>
    </recommendedName>
</protein>
<name>ADEC_PARD8</name>
<keyword id="KW-0378">Hydrolase</keyword>
<keyword id="KW-0464">Manganese</keyword>
<keyword id="KW-1185">Reference proteome</keyword>
<feature type="chain" id="PRO_0000300159" description="Adenine deaminase">
    <location>
        <begin position="1"/>
        <end position="545"/>
    </location>
</feature>
<reference key="1">
    <citation type="journal article" date="2007" name="PLoS Biol.">
        <title>Evolution of symbiotic bacteria in the distal human intestine.</title>
        <authorList>
            <person name="Xu J."/>
            <person name="Mahowald M.A."/>
            <person name="Ley R.E."/>
            <person name="Lozupone C.A."/>
            <person name="Hamady M."/>
            <person name="Martens E.C."/>
            <person name="Henrissat B."/>
            <person name="Coutinho P.M."/>
            <person name="Minx P."/>
            <person name="Latreille P."/>
            <person name="Cordum H."/>
            <person name="Van Brunt A."/>
            <person name="Kim K."/>
            <person name="Fulton R.S."/>
            <person name="Fulton L.A."/>
            <person name="Clifton S.W."/>
            <person name="Wilson R.K."/>
            <person name="Knight R.D."/>
            <person name="Gordon J.I."/>
        </authorList>
    </citation>
    <scope>NUCLEOTIDE SEQUENCE [LARGE SCALE GENOMIC DNA]</scope>
    <source>
        <strain>ATCC 8503 / DSM 20701 / CIP 104284 / JCM 5825 / NCTC 11152</strain>
    </source>
</reference>
<gene>
    <name evidence="1" type="primary">ade</name>
    <name type="ordered locus">BDI_2966</name>
</gene>
<accession>A6LG60</accession>
<sequence>MNEAKTLVIRGNLVDIINRRTFGAEISILNGHIGKVIPTGQDEGSYLLPGFIDAHVHIESSMVTPAAFIHAAVRHGSIGAVADPHEIANVMGTEGVEYMLDNAKGIPFYTWFGVPSCVPATIMETSGAIIDADETARLLEREDLHFLAEMMNYPGVLNKDPEVMRKIEAAKNAGKPIDGHYPLATGPKLKAYIESGISTDHETIYLEKGREKCELGMHVLIREGSAAKNFDALHPLLKEYPEQIMFCTDDAHPSFLNKGHINRMVKKSLDLGYDLYDVLRAASYNPAMHYKIPAGFLREGDSADFIQVNNLKNLTIQATYIQGTCVYDGEKCTLPFHKPILRNNFHTKPIPLEKLAVKAKGKQMRVIVCEDRELITKEELYPVHTFDGFVESDTERDILKLVILNRYQTAPPAIAFIKGTGLKLGAIAQSISHDSHNIIAIGVTDFELMQAINVVIKAKGGIAVSCMDEVTLLPLPVAGLMSDESLEETSRRYEEIEEKIKRLKSPMDSLQMTLSFMGLLAIPSLKLSNKGLFNSETFQFTSLFV</sequence>
<proteinExistence type="inferred from homology"/>
<evidence type="ECO:0000255" key="1">
    <source>
        <dbReference type="HAMAP-Rule" id="MF_01518"/>
    </source>
</evidence>
<comment type="catalytic activity">
    <reaction evidence="1">
        <text>adenine + H2O + H(+) = hypoxanthine + NH4(+)</text>
        <dbReference type="Rhea" id="RHEA:23688"/>
        <dbReference type="ChEBI" id="CHEBI:15377"/>
        <dbReference type="ChEBI" id="CHEBI:15378"/>
        <dbReference type="ChEBI" id="CHEBI:16708"/>
        <dbReference type="ChEBI" id="CHEBI:17368"/>
        <dbReference type="ChEBI" id="CHEBI:28938"/>
        <dbReference type="EC" id="3.5.4.2"/>
    </reaction>
</comment>
<comment type="cofactor">
    <cofactor evidence="1">
        <name>Mn(2+)</name>
        <dbReference type="ChEBI" id="CHEBI:29035"/>
    </cofactor>
</comment>
<comment type="similarity">
    <text evidence="1">Belongs to the metallo-dependent hydrolases superfamily. Adenine deaminase family.</text>
</comment>
<organism>
    <name type="scientific">Parabacteroides distasonis (strain ATCC 8503 / DSM 20701 / CIP 104284 / JCM 5825 / NCTC 11152)</name>
    <dbReference type="NCBI Taxonomy" id="435591"/>
    <lineage>
        <taxon>Bacteria</taxon>
        <taxon>Pseudomonadati</taxon>
        <taxon>Bacteroidota</taxon>
        <taxon>Bacteroidia</taxon>
        <taxon>Bacteroidales</taxon>
        <taxon>Tannerellaceae</taxon>
        <taxon>Parabacteroides</taxon>
    </lineage>
</organism>
<dbReference type="EC" id="3.5.4.2" evidence="1"/>
<dbReference type="EMBL" id="CP000140">
    <property type="protein sequence ID" value="ABR44674.1"/>
    <property type="molecule type" value="Genomic_DNA"/>
</dbReference>
<dbReference type="RefSeq" id="WP_011967083.1">
    <property type="nucleotide sequence ID" value="NC_009615.1"/>
</dbReference>
<dbReference type="SMR" id="A6LG60"/>
<dbReference type="STRING" id="435591.BDI_2966"/>
<dbReference type="PaxDb" id="435591-BDI_2966"/>
<dbReference type="KEGG" id="pdi:BDI_2966"/>
<dbReference type="PATRIC" id="fig|435591.13.peg.2928"/>
<dbReference type="eggNOG" id="COG1001">
    <property type="taxonomic scope" value="Bacteria"/>
</dbReference>
<dbReference type="HOGENOM" id="CLU_027935_0_0_10"/>
<dbReference type="BioCyc" id="PDIS435591:G1G5A-3043-MONOMER"/>
<dbReference type="Proteomes" id="UP000000566">
    <property type="component" value="Chromosome"/>
</dbReference>
<dbReference type="GO" id="GO:0000034">
    <property type="term" value="F:adenine deaminase activity"/>
    <property type="evidence" value="ECO:0007669"/>
    <property type="project" value="UniProtKB-UniRule"/>
</dbReference>
<dbReference type="GO" id="GO:0006146">
    <property type="term" value="P:adenine catabolic process"/>
    <property type="evidence" value="ECO:0007669"/>
    <property type="project" value="InterPro"/>
</dbReference>
<dbReference type="Gene3D" id="3.20.20.140">
    <property type="entry name" value="Metal-dependent hydrolases"/>
    <property type="match status" value="1"/>
</dbReference>
<dbReference type="HAMAP" id="MF_01518">
    <property type="entry name" value="Adenine_deamin"/>
    <property type="match status" value="1"/>
</dbReference>
<dbReference type="InterPro" id="IPR006679">
    <property type="entry name" value="Adenine_deam"/>
</dbReference>
<dbReference type="InterPro" id="IPR026912">
    <property type="entry name" value="Adenine_deam_C"/>
</dbReference>
<dbReference type="InterPro" id="IPR006680">
    <property type="entry name" value="Amidohydro-rel"/>
</dbReference>
<dbReference type="InterPro" id="IPR032466">
    <property type="entry name" value="Metal_Hydrolase"/>
</dbReference>
<dbReference type="NCBIfam" id="TIGR01178">
    <property type="entry name" value="ade"/>
    <property type="match status" value="1"/>
</dbReference>
<dbReference type="PANTHER" id="PTHR11113:SF2">
    <property type="entry name" value="ADENINE DEAMINASE"/>
    <property type="match status" value="1"/>
</dbReference>
<dbReference type="PANTHER" id="PTHR11113">
    <property type="entry name" value="N-ACETYLGLUCOSAMINE-6-PHOSPHATE DEACETYLASE"/>
    <property type="match status" value="1"/>
</dbReference>
<dbReference type="Pfam" id="PF13382">
    <property type="entry name" value="Adenine_deam_C"/>
    <property type="match status" value="1"/>
</dbReference>
<dbReference type="Pfam" id="PF01979">
    <property type="entry name" value="Amidohydro_1"/>
    <property type="match status" value="1"/>
</dbReference>
<dbReference type="SUPFAM" id="SSF51556">
    <property type="entry name" value="Metallo-dependent hydrolases"/>
    <property type="match status" value="1"/>
</dbReference>